<name>RL35_ORITI</name>
<organism>
    <name type="scientific">Orientia tsutsugamushi (strain Ikeda)</name>
    <name type="common">Rickettsia tsutsugamushi</name>
    <dbReference type="NCBI Taxonomy" id="334380"/>
    <lineage>
        <taxon>Bacteria</taxon>
        <taxon>Pseudomonadati</taxon>
        <taxon>Pseudomonadota</taxon>
        <taxon>Alphaproteobacteria</taxon>
        <taxon>Rickettsiales</taxon>
        <taxon>Rickettsiaceae</taxon>
        <taxon>Rickettsieae</taxon>
        <taxon>Orientia</taxon>
    </lineage>
</organism>
<evidence type="ECO:0000255" key="1">
    <source>
        <dbReference type="HAMAP-Rule" id="MF_00514"/>
    </source>
</evidence>
<evidence type="ECO:0000305" key="2"/>
<accession>B3CRZ1</accession>
<comment type="similarity">
    <text evidence="1">Belongs to the bacterial ribosomal protein bL35 family.</text>
</comment>
<protein>
    <recommendedName>
        <fullName evidence="1">Large ribosomal subunit protein bL35</fullName>
    </recommendedName>
    <alternativeName>
        <fullName evidence="2">50S ribosomal protein L35</fullName>
    </alternativeName>
</protein>
<feature type="chain" id="PRO_1000127385" description="Large ribosomal subunit protein bL35">
    <location>
        <begin position="1"/>
        <end position="68"/>
    </location>
</feature>
<reference key="1">
    <citation type="journal article" date="2008" name="DNA Res.">
        <title>The whole-genome sequencing of the obligate intracellular bacterium Orientia tsutsugamushi revealed massive gene amplification during reductive genome evolution.</title>
        <authorList>
            <person name="Nakayama K."/>
            <person name="Yamashita A."/>
            <person name="Kurokawa K."/>
            <person name="Morimoto T."/>
            <person name="Ogawa M."/>
            <person name="Fukuhara M."/>
            <person name="Urakami H."/>
            <person name="Ohnishi M."/>
            <person name="Uchiyama I."/>
            <person name="Ogura Y."/>
            <person name="Ooka T."/>
            <person name="Oshima K."/>
            <person name="Tamura A."/>
            <person name="Hattori M."/>
            <person name="Hayashi T."/>
        </authorList>
    </citation>
    <scope>NUCLEOTIDE SEQUENCE [LARGE SCALE GENOMIC DNA]</scope>
    <source>
        <strain>Ikeda</strain>
    </source>
</reference>
<keyword id="KW-0687">Ribonucleoprotein</keyword>
<keyword id="KW-0689">Ribosomal protein</keyword>
<gene>
    <name evidence="1" type="primary">rpmI</name>
    <name type="ordered locus">OTT_0790</name>
</gene>
<dbReference type="EMBL" id="AP008981">
    <property type="protein sequence ID" value="BAG40248.1"/>
    <property type="molecule type" value="Genomic_DNA"/>
</dbReference>
<dbReference type="RefSeq" id="WP_012461401.1">
    <property type="nucleotide sequence ID" value="NC_010793.1"/>
</dbReference>
<dbReference type="SMR" id="B3CRZ1"/>
<dbReference type="GeneID" id="89459075"/>
<dbReference type="KEGG" id="ott:OTT_0790"/>
<dbReference type="HOGENOM" id="CLU_169643_2_1_5"/>
<dbReference type="OrthoDB" id="9804851at2"/>
<dbReference type="Proteomes" id="UP000001033">
    <property type="component" value="Chromosome"/>
</dbReference>
<dbReference type="GO" id="GO:0022625">
    <property type="term" value="C:cytosolic large ribosomal subunit"/>
    <property type="evidence" value="ECO:0007669"/>
    <property type="project" value="TreeGrafter"/>
</dbReference>
<dbReference type="GO" id="GO:0003735">
    <property type="term" value="F:structural constituent of ribosome"/>
    <property type="evidence" value="ECO:0007669"/>
    <property type="project" value="InterPro"/>
</dbReference>
<dbReference type="GO" id="GO:0006412">
    <property type="term" value="P:translation"/>
    <property type="evidence" value="ECO:0007669"/>
    <property type="project" value="UniProtKB-UniRule"/>
</dbReference>
<dbReference type="FunFam" id="4.10.410.60:FF:000001">
    <property type="entry name" value="50S ribosomal protein L35"/>
    <property type="match status" value="1"/>
</dbReference>
<dbReference type="Gene3D" id="4.10.410.60">
    <property type="match status" value="1"/>
</dbReference>
<dbReference type="HAMAP" id="MF_00514">
    <property type="entry name" value="Ribosomal_bL35"/>
    <property type="match status" value="1"/>
</dbReference>
<dbReference type="InterPro" id="IPR001706">
    <property type="entry name" value="Ribosomal_bL35"/>
</dbReference>
<dbReference type="InterPro" id="IPR021137">
    <property type="entry name" value="Ribosomal_bL35-like"/>
</dbReference>
<dbReference type="InterPro" id="IPR018265">
    <property type="entry name" value="Ribosomal_bL35_CS"/>
</dbReference>
<dbReference type="InterPro" id="IPR037229">
    <property type="entry name" value="Ribosomal_bL35_sf"/>
</dbReference>
<dbReference type="NCBIfam" id="TIGR00001">
    <property type="entry name" value="rpmI_bact"/>
    <property type="match status" value="1"/>
</dbReference>
<dbReference type="PANTHER" id="PTHR33343">
    <property type="entry name" value="54S RIBOSOMAL PROTEIN BL35M"/>
    <property type="match status" value="1"/>
</dbReference>
<dbReference type="PANTHER" id="PTHR33343:SF1">
    <property type="entry name" value="LARGE RIBOSOMAL SUBUNIT PROTEIN BL35M"/>
    <property type="match status" value="1"/>
</dbReference>
<dbReference type="Pfam" id="PF01632">
    <property type="entry name" value="Ribosomal_L35p"/>
    <property type="match status" value="1"/>
</dbReference>
<dbReference type="PRINTS" id="PR00064">
    <property type="entry name" value="RIBOSOMALL35"/>
</dbReference>
<dbReference type="SUPFAM" id="SSF143034">
    <property type="entry name" value="L35p-like"/>
    <property type="match status" value="1"/>
</dbReference>
<dbReference type="PROSITE" id="PS00936">
    <property type="entry name" value="RIBOSOMAL_L35"/>
    <property type="match status" value="1"/>
</dbReference>
<sequence length="68" mass="7820">MPKLKTKSAVKKRFSLSSSGKLKVTQAGKRHFMRRRTKKQLRNLRGTTTLIGQDAKNIIKYLMPYGVQ</sequence>
<proteinExistence type="inferred from homology"/>